<name>LEXA_ACTP2</name>
<dbReference type="EC" id="3.4.21.88" evidence="1"/>
<dbReference type="EMBL" id="CP000569">
    <property type="protein sequence ID" value="ABN74200.1"/>
    <property type="molecule type" value="Genomic_DNA"/>
</dbReference>
<dbReference type="RefSeq" id="WP_005608326.1">
    <property type="nucleotide sequence ID" value="NC_009053.1"/>
</dbReference>
<dbReference type="SMR" id="A3N1B4"/>
<dbReference type="STRING" id="416269.APL_1108"/>
<dbReference type="MEROPS" id="S24.001"/>
<dbReference type="EnsemblBacteria" id="ABN74200">
    <property type="protein sequence ID" value="ABN74200"/>
    <property type="gene ID" value="APL_1108"/>
</dbReference>
<dbReference type="KEGG" id="apl:APL_1108"/>
<dbReference type="eggNOG" id="COG1974">
    <property type="taxonomic scope" value="Bacteria"/>
</dbReference>
<dbReference type="HOGENOM" id="CLU_066192_45_3_6"/>
<dbReference type="Proteomes" id="UP000001432">
    <property type="component" value="Chromosome"/>
</dbReference>
<dbReference type="GO" id="GO:0003677">
    <property type="term" value="F:DNA binding"/>
    <property type="evidence" value="ECO:0007669"/>
    <property type="project" value="UniProtKB-UniRule"/>
</dbReference>
<dbReference type="GO" id="GO:0004252">
    <property type="term" value="F:serine-type endopeptidase activity"/>
    <property type="evidence" value="ECO:0007669"/>
    <property type="project" value="UniProtKB-UniRule"/>
</dbReference>
<dbReference type="GO" id="GO:0006281">
    <property type="term" value="P:DNA repair"/>
    <property type="evidence" value="ECO:0007669"/>
    <property type="project" value="UniProtKB-UniRule"/>
</dbReference>
<dbReference type="GO" id="GO:0006260">
    <property type="term" value="P:DNA replication"/>
    <property type="evidence" value="ECO:0007669"/>
    <property type="project" value="UniProtKB-UniRule"/>
</dbReference>
<dbReference type="GO" id="GO:0045892">
    <property type="term" value="P:negative regulation of DNA-templated transcription"/>
    <property type="evidence" value="ECO:0007669"/>
    <property type="project" value="UniProtKB-UniRule"/>
</dbReference>
<dbReference type="GO" id="GO:0006508">
    <property type="term" value="P:proteolysis"/>
    <property type="evidence" value="ECO:0007669"/>
    <property type="project" value="InterPro"/>
</dbReference>
<dbReference type="GO" id="GO:0009432">
    <property type="term" value="P:SOS response"/>
    <property type="evidence" value="ECO:0007669"/>
    <property type="project" value="UniProtKB-UniRule"/>
</dbReference>
<dbReference type="CDD" id="cd06529">
    <property type="entry name" value="S24_LexA-like"/>
    <property type="match status" value="1"/>
</dbReference>
<dbReference type="FunFam" id="1.10.10.10:FF:000009">
    <property type="entry name" value="LexA repressor"/>
    <property type="match status" value="1"/>
</dbReference>
<dbReference type="FunFam" id="2.10.109.10:FF:000001">
    <property type="entry name" value="LexA repressor"/>
    <property type="match status" value="1"/>
</dbReference>
<dbReference type="Gene3D" id="2.10.109.10">
    <property type="entry name" value="Umud Fragment, subunit A"/>
    <property type="match status" value="1"/>
</dbReference>
<dbReference type="Gene3D" id="1.10.10.10">
    <property type="entry name" value="Winged helix-like DNA-binding domain superfamily/Winged helix DNA-binding domain"/>
    <property type="match status" value="1"/>
</dbReference>
<dbReference type="HAMAP" id="MF_00015">
    <property type="entry name" value="LexA"/>
    <property type="match status" value="1"/>
</dbReference>
<dbReference type="InterPro" id="IPR006200">
    <property type="entry name" value="LexA"/>
</dbReference>
<dbReference type="InterPro" id="IPR039418">
    <property type="entry name" value="LexA-like"/>
</dbReference>
<dbReference type="InterPro" id="IPR036286">
    <property type="entry name" value="LexA/Signal_pep-like_sf"/>
</dbReference>
<dbReference type="InterPro" id="IPR006199">
    <property type="entry name" value="LexA_DNA-bd_dom"/>
</dbReference>
<dbReference type="InterPro" id="IPR050077">
    <property type="entry name" value="LexA_repressor"/>
</dbReference>
<dbReference type="InterPro" id="IPR006197">
    <property type="entry name" value="Peptidase_S24_LexA"/>
</dbReference>
<dbReference type="InterPro" id="IPR015927">
    <property type="entry name" value="Peptidase_S24_S26A/B/C"/>
</dbReference>
<dbReference type="InterPro" id="IPR036388">
    <property type="entry name" value="WH-like_DNA-bd_sf"/>
</dbReference>
<dbReference type="InterPro" id="IPR036390">
    <property type="entry name" value="WH_DNA-bd_sf"/>
</dbReference>
<dbReference type="NCBIfam" id="TIGR00498">
    <property type="entry name" value="lexA"/>
    <property type="match status" value="1"/>
</dbReference>
<dbReference type="PANTHER" id="PTHR33516">
    <property type="entry name" value="LEXA REPRESSOR"/>
    <property type="match status" value="1"/>
</dbReference>
<dbReference type="PANTHER" id="PTHR33516:SF2">
    <property type="entry name" value="LEXA REPRESSOR-RELATED"/>
    <property type="match status" value="1"/>
</dbReference>
<dbReference type="Pfam" id="PF01726">
    <property type="entry name" value="LexA_DNA_bind"/>
    <property type="match status" value="1"/>
</dbReference>
<dbReference type="Pfam" id="PF00717">
    <property type="entry name" value="Peptidase_S24"/>
    <property type="match status" value="1"/>
</dbReference>
<dbReference type="PRINTS" id="PR00726">
    <property type="entry name" value="LEXASERPTASE"/>
</dbReference>
<dbReference type="SUPFAM" id="SSF51306">
    <property type="entry name" value="LexA/Signal peptidase"/>
    <property type="match status" value="1"/>
</dbReference>
<dbReference type="SUPFAM" id="SSF46785">
    <property type="entry name" value="Winged helix' DNA-binding domain"/>
    <property type="match status" value="1"/>
</dbReference>
<accession>A3N1B4</accession>
<keyword id="KW-0068">Autocatalytic cleavage</keyword>
<keyword id="KW-0227">DNA damage</keyword>
<keyword id="KW-0234">DNA repair</keyword>
<keyword id="KW-0235">DNA replication</keyword>
<keyword id="KW-0238">DNA-binding</keyword>
<keyword id="KW-0378">Hydrolase</keyword>
<keyword id="KW-1185">Reference proteome</keyword>
<keyword id="KW-0678">Repressor</keyword>
<keyword id="KW-0742">SOS response</keyword>
<keyword id="KW-0804">Transcription</keyword>
<keyword id="KW-0805">Transcription regulation</keyword>
<evidence type="ECO:0000255" key="1">
    <source>
        <dbReference type="HAMAP-Rule" id="MF_00015"/>
    </source>
</evidence>
<sequence length="210" mass="23369">MSRKHLTARQQEIFDFVKHHIETTGMPPTRVEIAREIGFKSPNAAEEHLKALARKGYIEMLSGTSRGIRILVDNEETAANDDGLPLIGKVAAGTPIMAIEHVESHYPVNGAMFNPNADYLLKVNGNSMEKIGILDGDLLAVHKTNFARNGQVVVARVDDEVTVKRLEKKGDLIYLHPENDELQPIIVDPRIEYIEIEGIAVGVIRNNAWM</sequence>
<feature type="chain" id="PRO_1000001252" description="LexA repressor">
    <location>
        <begin position="1"/>
        <end position="210"/>
    </location>
</feature>
<feature type="DNA-binding region" description="H-T-H motif" evidence="1">
    <location>
        <begin position="30"/>
        <end position="50"/>
    </location>
</feature>
<feature type="active site" description="For autocatalytic cleavage activity" evidence="1">
    <location>
        <position position="127"/>
    </location>
</feature>
<feature type="active site" description="For autocatalytic cleavage activity" evidence="1">
    <location>
        <position position="164"/>
    </location>
</feature>
<feature type="site" description="Cleavage; by autolysis" evidence="1">
    <location>
        <begin position="92"/>
        <end position="93"/>
    </location>
</feature>
<comment type="function">
    <text evidence="1">Represses a number of genes involved in the response to DNA damage (SOS response), including recA and lexA. In the presence of single-stranded DNA, RecA interacts with LexA causing an autocatalytic cleavage which disrupts the DNA-binding part of LexA, leading to derepression of the SOS regulon and eventually DNA repair.</text>
</comment>
<comment type="catalytic activity">
    <reaction evidence="1">
        <text>Hydrolysis of Ala-|-Gly bond in repressor LexA.</text>
        <dbReference type="EC" id="3.4.21.88"/>
    </reaction>
</comment>
<comment type="subunit">
    <text evidence="1">Homodimer.</text>
</comment>
<comment type="similarity">
    <text evidence="1">Belongs to the peptidase S24 family.</text>
</comment>
<organism>
    <name type="scientific">Actinobacillus pleuropneumoniae serotype 5b (strain L20)</name>
    <dbReference type="NCBI Taxonomy" id="416269"/>
    <lineage>
        <taxon>Bacteria</taxon>
        <taxon>Pseudomonadati</taxon>
        <taxon>Pseudomonadota</taxon>
        <taxon>Gammaproteobacteria</taxon>
        <taxon>Pasteurellales</taxon>
        <taxon>Pasteurellaceae</taxon>
        <taxon>Actinobacillus</taxon>
    </lineage>
</organism>
<reference key="1">
    <citation type="journal article" date="2008" name="J. Bacteriol.">
        <title>The complete genome sequence of Actinobacillus pleuropneumoniae L20 (serotype 5b).</title>
        <authorList>
            <person name="Foote S.J."/>
            <person name="Bosse J.T."/>
            <person name="Bouevitch A.B."/>
            <person name="Langford P.R."/>
            <person name="Young N.M."/>
            <person name="Nash J.H.E."/>
        </authorList>
    </citation>
    <scope>NUCLEOTIDE SEQUENCE [LARGE SCALE GENOMIC DNA]</scope>
    <source>
        <strain>L20</strain>
    </source>
</reference>
<gene>
    <name evidence="1" type="primary">lexA</name>
    <name type="ordered locus">APL_1108</name>
</gene>
<proteinExistence type="inferred from homology"/>
<protein>
    <recommendedName>
        <fullName evidence="1">LexA repressor</fullName>
        <ecNumber evidence="1">3.4.21.88</ecNumber>
    </recommendedName>
</protein>